<accession>P23257</accession>
<accession>Q9VQJ5</accession>
<gene>
    <name type="primary">gammaTub23C</name>
    <name type="synonym">Tub23C</name>
    <name type="synonym">TubG</name>
    <name type="synonym">TubG1</name>
    <name type="synonym">TubG23C</name>
    <name type="ORF">CG3157</name>
</gene>
<dbReference type="EMBL" id="M61765">
    <property type="protein sequence ID" value="AAA28597.1"/>
    <property type="molecule type" value="mRNA"/>
</dbReference>
<dbReference type="EMBL" id="AE014134">
    <property type="protein sequence ID" value="AAF51174.1"/>
    <property type="molecule type" value="Genomic_DNA"/>
</dbReference>
<dbReference type="EMBL" id="AY069633">
    <property type="protein sequence ID" value="AAL39778.1"/>
    <property type="molecule type" value="mRNA"/>
</dbReference>
<dbReference type="EMBL" id="AF073994">
    <property type="protein sequence ID" value="AAC27620.1"/>
    <property type="molecule type" value="Genomic_DNA"/>
</dbReference>
<dbReference type="PIR" id="B39527">
    <property type="entry name" value="UBFFG"/>
</dbReference>
<dbReference type="RefSeq" id="NP_476804.1">
    <property type="nucleotide sequence ID" value="NM_057456.4"/>
</dbReference>
<dbReference type="SMR" id="P23257"/>
<dbReference type="BioGRID" id="59721">
    <property type="interactions" value="32"/>
</dbReference>
<dbReference type="ComplexPortal" id="CPX-2243">
    <property type="entry name" value="Testis-specific gamma-tubulin ring complex"/>
</dbReference>
<dbReference type="ComplexPortal" id="CPX-2776">
    <property type="entry name" value="Gamma-tubulin small complex"/>
</dbReference>
<dbReference type="ComplexPortal" id="CPX-2801">
    <property type="entry name" value="Gamma-tubulin ring complex"/>
</dbReference>
<dbReference type="FunCoup" id="P23257">
    <property type="interactions" value="1040"/>
</dbReference>
<dbReference type="IntAct" id="P23257">
    <property type="interactions" value="26"/>
</dbReference>
<dbReference type="STRING" id="7227.FBpp0077326"/>
<dbReference type="PaxDb" id="7227-FBpp0077326"/>
<dbReference type="DNASU" id="33501"/>
<dbReference type="EnsemblMetazoa" id="FBtr0077641">
    <property type="protein sequence ID" value="FBpp0077326"/>
    <property type="gene ID" value="FBgn0260639"/>
</dbReference>
<dbReference type="GeneID" id="33501"/>
<dbReference type="KEGG" id="dme:Dmel_CG3157"/>
<dbReference type="AGR" id="FB:FBgn0260639"/>
<dbReference type="CTD" id="33501"/>
<dbReference type="FlyBase" id="FBgn0260639">
    <property type="gene designation" value="gammaTub23C"/>
</dbReference>
<dbReference type="VEuPathDB" id="VectorBase:FBgn0260639"/>
<dbReference type="eggNOG" id="KOG1374">
    <property type="taxonomic scope" value="Eukaryota"/>
</dbReference>
<dbReference type="GeneTree" id="ENSGT00940000156957"/>
<dbReference type="HOGENOM" id="CLU_015718_1_0_1"/>
<dbReference type="InParanoid" id="P23257"/>
<dbReference type="OMA" id="HRYISIL"/>
<dbReference type="OrthoDB" id="10249382at2759"/>
<dbReference type="PhylomeDB" id="P23257"/>
<dbReference type="BioGRID-ORCS" id="33501">
    <property type="hits" value="1 hit in 3 CRISPR screens"/>
</dbReference>
<dbReference type="CD-CODE" id="2838EF58">
    <property type="entry name" value="Centrosome"/>
</dbReference>
<dbReference type="GenomeRNAi" id="33501"/>
<dbReference type="PRO" id="PR:P23257"/>
<dbReference type="Proteomes" id="UP000000803">
    <property type="component" value="Chromosome 2L"/>
</dbReference>
<dbReference type="Bgee" id="FBgn0260639">
    <property type="expression patterns" value="Expressed in capitellum (Drosophila) and 63 other cell types or tissues"/>
</dbReference>
<dbReference type="GO" id="GO:0005813">
    <property type="term" value="C:centrosome"/>
    <property type="evidence" value="ECO:0000314"/>
    <property type="project" value="FlyBase"/>
</dbReference>
<dbReference type="GO" id="GO:0005737">
    <property type="term" value="C:cytoplasm"/>
    <property type="evidence" value="ECO:0000314"/>
    <property type="project" value="FlyBase"/>
</dbReference>
<dbReference type="GO" id="GO:0000930">
    <property type="term" value="C:gamma-tubulin complex"/>
    <property type="evidence" value="ECO:0000353"/>
    <property type="project" value="FlyBase"/>
</dbReference>
<dbReference type="GO" id="GO:0000931">
    <property type="term" value="C:gamma-tubulin ring complex"/>
    <property type="evidence" value="ECO:0000314"/>
    <property type="project" value="FlyBase"/>
</dbReference>
<dbReference type="GO" id="GO:0008275">
    <property type="term" value="C:gamma-tubulin small complex"/>
    <property type="evidence" value="ECO:0000353"/>
    <property type="project" value="FlyBase"/>
</dbReference>
<dbReference type="GO" id="GO:0005874">
    <property type="term" value="C:microtubule"/>
    <property type="evidence" value="ECO:0000314"/>
    <property type="project" value="FlyBase"/>
</dbReference>
<dbReference type="GO" id="GO:0005634">
    <property type="term" value="C:nucleus"/>
    <property type="evidence" value="ECO:0000318"/>
    <property type="project" value="GO_Central"/>
</dbReference>
<dbReference type="GO" id="GO:0000242">
    <property type="term" value="C:pericentriolar material"/>
    <property type="evidence" value="ECO:0000314"/>
    <property type="project" value="FlyBase"/>
</dbReference>
<dbReference type="GO" id="GO:0048471">
    <property type="term" value="C:perinuclear region of cytoplasm"/>
    <property type="evidence" value="ECO:0007669"/>
    <property type="project" value="UniProtKB-SubCell"/>
</dbReference>
<dbReference type="GO" id="GO:0005819">
    <property type="term" value="C:spindle"/>
    <property type="evidence" value="ECO:0000314"/>
    <property type="project" value="FlyBase"/>
</dbReference>
<dbReference type="GO" id="GO:0005525">
    <property type="term" value="F:GTP binding"/>
    <property type="evidence" value="ECO:0000314"/>
    <property type="project" value="FlyBase"/>
</dbReference>
<dbReference type="GO" id="GO:0019001">
    <property type="term" value="F:guanyl nucleotide binding"/>
    <property type="evidence" value="ECO:0000314"/>
    <property type="project" value="FlyBase"/>
</dbReference>
<dbReference type="GO" id="GO:0140490">
    <property type="term" value="F:microtubule nucleator activity"/>
    <property type="evidence" value="ECO:0000318"/>
    <property type="project" value="GO_Central"/>
</dbReference>
<dbReference type="GO" id="GO:0010457">
    <property type="term" value="P:centriole-centriole cohesion"/>
    <property type="evidence" value="ECO:0000314"/>
    <property type="project" value="FlyBase"/>
</dbReference>
<dbReference type="GO" id="GO:0007098">
    <property type="term" value="P:centrosome cycle"/>
    <property type="evidence" value="ECO:0000315"/>
    <property type="project" value="FlyBase"/>
</dbReference>
<dbReference type="GO" id="GO:0031122">
    <property type="term" value="P:cytoplasmic microtubule organization"/>
    <property type="evidence" value="ECO:0007669"/>
    <property type="project" value="InterPro"/>
</dbReference>
<dbReference type="GO" id="GO:0000212">
    <property type="term" value="P:meiotic spindle organization"/>
    <property type="evidence" value="ECO:0000318"/>
    <property type="project" value="GO_Central"/>
</dbReference>
<dbReference type="GO" id="GO:0007020">
    <property type="term" value="P:microtubule nucleation"/>
    <property type="evidence" value="ECO:0000314"/>
    <property type="project" value="FlyBase"/>
</dbReference>
<dbReference type="GO" id="GO:0000278">
    <property type="term" value="P:mitotic cell cycle"/>
    <property type="evidence" value="ECO:0007001"/>
    <property type="project" value="FlyBase"/>
</dbReference>
<dbReference type="GO" id="GO:0000070">
    <property type="term" value="P:mitotic sister chromatid segregation"/>
    <property type="evidence" value="ECO:0000318"/>
    <property type="project" value="GO_Central"/>
</dbReference>
<dbReference type="GO" id="GO:0051306">
    <property type="term" value="P:mitotic sister chromatid separation"/>
    <property type="evidence" value="ECO:0000314"/>
    <property type="project" value="FlyBase"/>
</dbReference>
<dbReference type="GO" id="GO:0007052">
    <property type="term" value="P:mitotic spindle organization"/>
    <property type="evidence" value="ECO:0000318"/>
    <property type="project" value="GO_Central"/>
</dbReference>
<dbReference type="GO" id="GO:0051726">
    <property type="term" value="P:regulation of cell cycle"/>
    <property type="evidence" value="ECO:0000315"/>
    <property type="project" value="FlyBase"/>
</dbReference>
<dbReference type="CDD" id="cd02188">
    <property type="entry name" value="gamma_tubulin"/>
    <property type="match status" value="1"/>
</dbReference>
<dbReference type="FunFam" id="1.10.287.600:FF:000004">
    <property type="entry name" value="Tubulin gamma chain"/>
    <property type="match status" value="1"/>
</dbReference>
<dbReference type="FunFam" id="3.30.1330.20:FF:000003">
    <property type="entry name" value="Tubulin gamma chain"/>
    <property type="match status" value="1"/>
</dbReference>
<dbReference type="FunFam" id="3.40.50.1440:FF:000010">
    <property type="entry name" value="Tubulin gamma chain"/>
    <property type="match status" value="1"/>
</dbReference>
<dbReference type="Gene3D" id="1.10.287.600">
    <property type="entry name" value="Helix hairpin bin"/>
    <property type="match status" value="1"/>
</dbReference>
<dbReference type="Gene3D" id="3.30.1330.20">
    <property type="entry name" value="Tubulin/FtsZ, C-terminal domain"/>
    <property type="match status" value="1"/>
</dbReference>
<dbReference type="Gene3D" id="3.40.50.1440">
    <property type="entry name" value="Tubulin/FtsZ, GTPase domain"/>
    <property type="match status" value="1"/>
</dbReference>
<dbReference type="InterPro" id="IPR002454">
    <property type="entry name" value="Gamma_tubulin"/>
</dbReference>
<dbReference type="InterPro" id="IPR008280">
    <property type="entry name" value="Tub_FtsZ_C"/>
</dbReference>
<dbReference type="InterPro" id="IPR000217">
    <property type="entry name" value="Tubulin"/>
</dbReference>
<dbReference type="InterPro" id="IPR037103">
    <property type="entry name" value="Tubulin/FtsZ-like_C"/>
</dbReference>
<dbReference type="InterPro" id="IPR018316">
    <property type="entry name" value="Tubulin/FtsZ_2-layer-sand-dom"/>
</dbReference>
<dbReference type="InterPro" id="IPR036525">
    <property type="entry name" value="Tubulin/FtsZ_GTPase_sf"/>
</dbReference>
<dbReference type="InterPro" id="IPR023123">
    <property type="entry name" value="Tubulin_C"/>
</dbReference>
<dbReference type="InterPro" id="IPR017975">
    <property type="entry name" value="Tubulin_CS"/>
</dbReference>
<dbReference type="InterPro" id="IPR003008">
    <property type="entry name" value="Tubulin_FtsZ_GTPase"/>
</dbReference>
<dbReference type="PANTHER" id="PTHR11588">
    <property type="entry name" value="TUBULIN"/>
    <property type="match status" value="1"/>
</dbReference>
<dbReference type="Pfam" id="PF00091">
    <property type="entry name" value="Tubulin"/>
    <property type="match status" value="1"/>
</dbReference>
<dbReference type="Pfam" id="PF03953">
    <property type="entry name" value="Tubulin_C"/>
    <property type="match status" value="1"/>
</dbReference>
<dbReference type="PRINTS" id="PR01164">
    <property type="entry name" value="GAMMATUBULIN"/>
</dbReference>
<dbReference type="PRINTS" id="PR01161">
    <property type="entry name" value="TUBULIN"/>
</dbReference>
<dbReference type="SMART" id="SM00864">
    <property type="entry name" value="Tubulin"/>
    <property type="match status" value="1"/>
</dbReference>
<dbReference type="SMART" id="SM00865">
    <property type="entry name" value="Tubulin_C"/>
    <property type="match status" value="1"/>
</dbReference>
<dbReference type="SUPFAM" id="SSF55307">
    <property type="entry name" value="Tubulin C-terminal domain-like"/>
    <property type="match status" value="1"/>
</dbReference>
<dbReference type="SUPFAM" id="SSF52490">
    <property type="entry name" value="Tubulin nucleotide-binding domain-like"/>
    <property type="match status" value="1"/>
</dbReference>
<dbReference type="PROSITE" id="PS00227">
    <property type="entry name" value="TUBULIN"/>
    <property type="match status" value="1"/>
</dbReference>
<evidence type="ECO:0000255" key="1"/>
<evidence type="ECO:0000256" key="2">
    <source>
        <dbReference type="SAM" id="MobiDB-lite"/>
    </source>
</evidence>
<evidence type="ECO:0000269" key="3">
    <source>
    </source>
</evidence>
<evidence type="ECO:0000269" key="4">
    <source>
    </source>
</evidence>
<evidence type="ECO:0000305" key="5"/>
<proteinExistence type="evidence at protein level"/>
<name>TBG1_DROME</name>
<comment type="function">
    <text>Tubulin is the major constituent of microtubules. The gamma chain is found at microtubule organizing centers (MTOC) such as the spindle poles or the centrosome, suggesting that it is involved in the minus-end nucleation of microtubule assembly.</text>
</comment>
<comment type="subunit">
    <text evidence="3">Interacts with Ote.</text>
</comment>
<comment type="subcellular location">
    <subcellularLocation>
        <location evidence="5">Cytoplasm</location>
        <location evidence="5">Cytoskeleton</location>
        <location evidence="5">Microtubule organizing center</location>
        <location evidence="5">Centrosome</location>
    </subcellularLocation>
    <subcellularLocation>
        <location evidence="4">Cytoplasm</location>
        <location evidence="4">Cytoskeleton</location>
        <location evidence="4">Microtubule organizing center</location>
    </subcellularLocation>
    <subcellularLocation>
        <location evidence="4">Cytoplasm</location>
        <location evidence="4">Perinuclear region</location>
    </subcellularLocation>
    <text evidence="4">In the fat body, localizes to a perinuclear non-centrosomal microtubule-organizing centers (ncMTOCs).</text>
</comment>
<comment type="disruption phenotype">
    <text evidence="4">RNAi-mediated knockdown has no effect on nuclear positioning in fat body cells.</text>
</comment>
<comment type="similarity">
    <text evidence="5">Belongs to the tubulin family.</text>
</comment>
<sequence>MPSEIITLQLGQCGNQIGFEFWKRLCLEHGISPSGVLEDFANDGLDRKDVFFYQADDDHYIPRAVLLDLEPRVINTIMGSVYSKLYNPENVYLSKHGGGAGNNWASGYSQGEKLQEEVFDIIDREADGSDSLEGFILCHSIAGGTGSGMGSFIMERLADRYPKKLIQTFSVFPNQDEISDVVVQPYNSMLTLKRLTTAADSVVVLDNTALNRIACDRLHIQNPSFSQINNLVSTIMSVSTTTLRYPSYMNNNLIGLTAPLIPTPQLHFLMTGYTPLTSDSDIHTQQLVNVRKTTVLDVMRRLLQPKNMMVSTGPDKSNHHCYISILNIIQGEVDPTQVHKSLQRIRDRKMAQFIPWGPTSIQVALSRSSPYVQSNHRVSGLMLANHTSICSLFERALNQYDKLRKRGAFLDQFRREDIFKDDLNELDESRETVDCLVQEYEAATREDYMQFSVKRGNGPVDSKSEDSRSVTSAGS</sequence>
<protein>
    <recommendedName>
        <fullName>Tubulin gamma-1 chain</fullName>
    </recommendedName>
    <alternativeName>
        <fullName>Gamma-1-tubulin</fullName>
    </alternativeName>
</protein>
<feature type="chain" id="PRO_0000048454" description="Tubulin gamma-1 chain">
    <location>
        <begin position="1"/>
        <end position="475"/>
    </location>
</feature>
<feature type="region of interest" description="Disordered" evidence="2">
    <location>
        <begin position="453"/>
        <end position="475"/>
    </location>
</feature>
<feature type="binding site" evidence="1">
    <location>
        <begin position="142"/>
        <end position="148"/>
    </location>
    <ligand>
        <name>GTP</name>
        <dbReference type="ChEBI" id="CHEBI:37565"/>
    </ligand>
</feature>
<feature type="sequence conflict" description="In Ref. 1; AAA28597." evidence="5" ref="1">
    <original>KL</original>
    <variation>NV</variation>
    <location>
        <begin position="402"/>
        <end position="403"/>
    </location>
</feature>
<keyword id="KW-0963">Cytoplasm</keyword>
<keyword id="KW-0206">Cytoskeleton</keyword>
<keyword id="KW-0342">GTP-binding</keyword>
<keyword id="KW-0493">Microtubule</keyword>
<keyword id="KW-0547">Nucleotide-binding</keyword>
<keyword id="KW-1185">Reference proteome</keyword>
<reference key="1">
    <citation type="journal article" date="1991" name="Cell">
        <title>Gamma-tubulin is present in Drosophila melanogaster and Homo sapiens and is associated with the centrosome.</title>
        <authorList>
            <person name="Zheng Y."/>
            <person name="Jung M.K."/>
            <person name="Oakley B.R."/>
        </authorList>
    </citation>
    <scope>NUCLEOTIDE SEQUENCE [MRNA]</scope>
</reference>
<reference key="2">
    <citation type="journal article" date="2000" name="Science">
        <title>The genome sequence of Drosophila melanogaster.</title>
        <authorList>
            <person name="Adams M.D."/>
            <person name="Celniker S.E."/>
            <person name="Holt R.A."/>
            <person name="Evans C.A."/>
            <person name="Gocayne J.D."/>
            <person name="Amanatides P.G."/>
            <person name="Scherer S.E."/>
            <person name="Li P.W."/>
            <person name="Hoskins R.A."/>
            <person name="Galle R.F."/>
            <person name="George R.A."/>
            <person name="Lewis S.E."/>
            <person name="Richards S."/>
            <person name="Ashburner M."/>
            <person name="Henderson S.N."/>
            <person name="Sutton G.G."/>
            <person name="Wortman J.R."/>
            <person name="Yandell M.D."/>
            <person name="Zhang Q."/>
            <person name="Chen L.X."/>
            <person name="Brandon R.C."/>
            <person name="Rogers Y.-H.C."/>
            <person name="Blazej R.G."/>
            <person name="Champe M."/>
            <person name="Pfeiffer B.D."/>
            <person name="Wan K.H."/>
            <person name="Doyle C."/>
            <person name="Baxter E.G."/>
            <person name="Helt G."/>
            <person name="Nelson C.R."/>
            <person name="Miklos G.L.G."/>
            <person name="Abril J.F."/>
            <person name="Agbayani A."/>
            <person name="An H.-J."/>
            <person name="Andrews-Pfannkoch C."/>
            <person name="Baldwin D."/>
            <person name="Ballew R.M."/>
            <person name="Basu A."/>
            <person name="Baxendale J."/>
            <person name="Bayraktaroglu L."/>
            <person name="Beasley E.M."/>
            <person name="Beeson K.Y."/>
            <person name="Benos P.V."/>
            <person name="Berman B.P."/>
            <person name="Bhandari D."/>
            <person name="Bolshakov S."/>
            <person name="Borkova D."/>
            <person name="Botchan M.R."/>
            <person name="Bouck J."/>
            <person name="Brokstein P."/>
            <person name="Brottier P."/>
            <person name="Burtis K.C."/>
            <person name="Busam D.A."/>
            <person name="Butler H."/>
            <person name="Cadieu E."/>
            <person name="Center A."/>
            <person name="Chandra I."/>
            <person name="Cherry J.M."/>
            <person name="Cawley S."/>
            <person name="Dahlke C."/>
            <person name="Davenport L.B."/>
            <person name="Davies P."/>
            <person name="de Pablos B."/>
            <person name="Delcher A."/>
            <person name="Deng Z."/>
            <person name="Mays A.D."/>
            <person name="Dew I."/>
            <person name="Dietz S.M."/>
            <person name="Dodson K."/>
            <person name="Doup L.E."/>
            <person name="Downes M."/>
            <person name="Dugan-Rocha S."/>
            <person name="Dunkov B.C."/>
            <person name="Dunn P."/>
            <person name="Durbin K.J."/>
            <person name="Evangelista C.C."/>
            <person name="Ferraz C."/>
            <person name="Ferriera S."/>
            <person name="Fleischmann W."/>
            <person name="Fosler C."/>
            <person name="Gabrielian A.E."/>
            <person name="Garg N.S."/>
            <person name="Gelbart W.M."/>
            <person name="Glasser K."/>
            <person name="Glodek A."/>
            <person name="Gong F."/>
            <person name="Gorrell J.H."/>
            <person name="Gu Z."/>
            <person name="Guan P."/>
            <person name="Harris M."/>
            <person name="Harris N.L."/>
            <person name="Harvey D.A."/>
            <person name="Heiman T.J."/>
            <person name="Hernandez J.R."/>
            <person name="Houck J."/>
            <person name="Hostin D."/>
            <person name="Houston K.A."/>
            <person name="Howland T.J."/>
            <person name="Wei M.-H."/>
            <person name="Ibegwam C."/>
            <person name="Jalali M."/>
            <person name="Kalush F."/>
            <person name="Karpen G.H."/>
            <person name="Ke Z."/>
            <person name="Kennison J.A."/>
            <person name="Ketchum K.A."/>
            <person name="Kimmel B.E."/>
            <person name="Kodira C.D."/>
            <person name="Kraft C.L."/>
            <person name="Kravitz S."/>
            <person name="Kulp D."/>
            <person name="Lai Z."/>
            <person name="Lasko P."/>
            <person name="Lei Y."/>
            <person name="Levitsky A.A."/>
            <person name="Li J.H."/>
            <person name="Li Z."/>
            <person name="Liang Y."/>
            <person name="Lin X."/>
            <person name="Liu X."/>
            <person name="Mattei B."/>
            <person name="McIntosh T.C."/>
            <person name="McLeod M.P."/>
            <person name="McPherson D."/>
            <person name="Merkulov G."/>
            <person name="Milshina N.V."/>
            <person name="Mobarry C."/>
            <person name="Morris J."/>
            <person name="Moshrefi A."/>
            <person name="Mount S.M."/>
            <person name="Moy M."/>
            <person name="Murphy B."/>
            <person name="Murphy L."/>
            <person name="Muzny D.M."/>
            <person name="Nelson D.L."/>
            <person name="Nelson D.R."/>
            <person name="Nelson K.A."/>
            <person name="Nixon K."/>
            <person name="Nusskern D.R."/>
            <person name="Pacleb J.M."/>
            <person name="Palazzolo M."/>
            <person name="Pittman G.S."/>
            <person name="Pan S."/>
            <person name="Pollard J."/>
            <person name="Puri V."/>
            <person name="Reese M.G."/>
            <person name="Reinert K."/>
            <person name="Remington K."/>
            <person name="Saunders R.D.C."/>
            <person name="Scheeler F."/>
            <person name="Shen H."/>
            <person name="Shue B.C."/>
            <person name="Siden-Kiamos I."/>
            <person name="Simpson M."/>
            <person name="Skupski M.P."/>
            <person name="Smith T.J."/>
            <person name="Spier E."/>
            <person name="Spradling A.C."/>
            <person name="Stapleton M."/>
            <person name="Strong R."/>
            <person name="Sun E."/>
            <person name="Svirskas R."/>
            <person name="Tector C."/>
            <person name="Turner R."/>
            <person name="Venter E."/>
            <person name="Wang A.H."/>
            <person name="Wang X."/>
            <person name="Wang Z.-Y."/>
            <person name="Wassarman D.A."/>
            <person name="Weinstock G.M."/>
            <person name="Weissenbach J."/>
            <person name="Williams S.M."/>
            <person name="Woodage T."/>
            <person name="Worley K.C."/>
            <person name="Wu D."/>
            <person name="Yang S."/>
            <person name="Yao Q.A."/>
            <person name="Ye J."/>
            <person name="Yeh R.-F."/>
            <person name="Zaveri J.S."/>
            <person name="Zhan M."/>
            <person name="Zhang G."/>
            <person name="Zhao Q."/>
            <person name="Zheng L."/>
            <person name="Zheng X.H."/>
            <person name="Zhong F.N."/>
            <person name="Zhong W."/>
            <person name="Zhou X."/>
            <person name="Zhu S.C."/>
            <person name="Zhu X."/>
            <person name="Smith H.O."/>
            <person name="Gibbs R.A."/>
            <person name="Myers E.W."/>
            <person name="Rubin G.M."/>
            <person name="Venter J.C."/>
        </authorList>
    </citation>
    <scope>NUCLEOTIDE SEQUENCE [LARGE SCALE GENOMIC DNA]</scope>
    <source>
        <strain>Berkeley</strain>
    </source>
</reference>
<reference key="3">
    <citation type="journal article" date="2002" name="Genome Biol.">
        <title>Annotation of the Drosophila melanogaster euchromatic genome: a systematic review.</title>
        <authorList>
            <person name="Misra S."/>
            <person name="Crosby M.A."/>
            <person name="Mungall C.J."/>
            <person name="Matthews B.B."/>
            <person name="Campbell K.S."/>
            <person name="Hradecky P."/>
            <person name="Huang Y."/>
            <person name="Kaminker J.S."/>
            <person name="Millburn G.H."/>
            <person name="Prochnik S.E."/>
            <person name="Smith C.D."/>
            <person name="Tupy J.L."/>
            <person name="Whitfield E.J."/>
            <person name="Bayraktaroglu L."/>
            <person name="Berman B.P."/>
            <person name="Bettencourt B.R."/>
            <person name="Celniker S.E."/>
            <person name="de Grey A.D.N.J."/>
            <person name="Drysdale R.A."/>
            <person name="Harris N.L."/>
            <person name="Richter J."/>
            <person name="Russo S."/>
            <person name="Schroeder A.J."/>
            <person name="Shu S.Q."/>
            <person name="Stapleton M."/>
            <person name="Yamada C."/>
            <person name="Ashburner M."/>
            <person name="Gelbart W.M."/>
            <person name="Rubin G.M."/>
            <person name="Lewis S.E."/>
        </authorList>
    </citation>
    <scope>GENOME REANNOTATION</scope>
    <source>
        <strain>Berkeley</strain>
    </source>
</reference>
<reference key="4">
    <citation type="journal article" date="2002" name="Genome Biol.">
        <title>A Drosophila full-length cDNA resource.</title>
        <authorList>
            <person name="Stapleton M."/>
            <person name="Carlson J.W."/>
            <person name="Brokstein P."/>
            <person name="Yu C."/>
            <person name="Champe M."/>
            <person name="George R.A."/>
            <person name="Guarin H."/>
            <person name="Kronmiller B."/>
            <person name="Pacleb J.M."/>
            <person name="Park S."/>
            <person name="Wan K.H."/>
            <person name="Rubin G.M."/>
            <person name="Celniker S.E."/>
        </authorList>
    </citation>
    <scope>NUCLEOTIDE SEQUENCE [LARGE SCALE MRNA]</scope>
    <source>
        <strain>Berkeley</strain>
        <tissue>Embryo</tissue>
    </source>
</reference>
<reference key="5">
    <citation type="submission" date="1998-06" db="EMBL/GenBank/DDBJ databases">
        <title>Genomic organization of the Drosophlia 23C genetic interval: identification of 3 genes in the 10Kb region surrounding the RRP1 gene.</title>
        <authorList>
            <person name="Tsoi S.C.M."/>
            <person name="Huang S.M."/>
            <person name="Sander M."/>
        </authorList>
    </citation>
    <scope>NUCLEOTIDE SEQUENCE [GENOMIC DNA] OF 1-333</scope>
    <source>
        <strain>Canton-S</strain>
    </source>
</reference>
<reference key="6">
    <citation type="journal article" date="2012" name="Mol. Cell. Biol.">
        <title>Functional analysis of centrosomal kinase substrates in Drosophila melanogaster reveals a new function of the nuclear envelope component otefin in cell cycle progression.</title>
        <authorList>
            <person name="Habermann K."/>
            <person name="Mirgorodskaya E."/>
            <person name="Gobom J."/>
            <person name="Lehmann V."/>
            <person name="Mueller H."/>
            <person name="Bluemlein K."/>
            <person name="Deery M.J."/>
            <person name="Czogiel I."/>
            <person name="Erdmann C."/>
            <person name="Ralser M."/>
            <person name="von Kries J.P."/>
            <person name="Lange B.M."/>
        </authorList>
    </citation>
    <scope>INTERACTION WITH OTE</scope>
</reference>
<reference key="7">
    <citation type="journal article" date="2020" name="Nat. Cell Biol.">
        <title>A perinuclear microtubule-organizing centre controls nuclear positioning and basement membrane secretion.</title>
        <authorList>
            <person name="Zheng Y."/>
            <person name="Buchwalter R.A."/>
            <person name="Zheng C."/>
            <person name="Wight E.M."/>
            <person name="Chen J.V."/>
            <person name="Megraw T.L."/>
        </authorList>
    </citation>
    <scope>SUBCELLULAR LOCATION</scope>
    <scope>DISRUPTION PHENOTYPE</scope>
</reference>
<organism>
    <name type="scientific">Drosophila melanogaster</name>
    <name type="common">Fruit fly</name>
    <dbReference type="NCBI Taxonomy" id="7227"/>
    <lineage>
        <taxon>Eukaryota</taxon>
        <taxon>Metazoa</taxon>
        <taxon>Ecdysozoa</taxon>
        <taxon>Arthropoda</taxon>
        <taxon>Hexapoda</taxon>
        <taxon>Insecta</taxon>
        <taxon>Pterygota</taxon>
        <taxon>Neoptera</taxon>
        <taxon>Endopterygota</taxon>
        <taxon>Diptera</taxon>
        <taxon>Brachycera</taxon>
        <taxon>Muscomorpha</taxon>
        <taxon>Ephydroidea</taxon>
        <taxon>Drosophilidae</taxon>
        <taxon>Drosophila</taxon>
        <taxon>Sophophora</taxon>
    </lineage>
</organism>